<feature type="chain" id="PRO_1000189654" description="ATP-dependent Clp protease proteolytic subunit">
    <location>
        <begin position="1"/>
        <end position="197"/>
    </location>
</feature>
<feature type="active site" description="Nucleophile" evidence="1">
    <location>
        <position position="98"/>
    </location>
</feature>
<feature type="active site" evidence="1">
    <location>
        <position position="123"/>
    </location>
</feature>
<accession>B1HVR0</accession>
<keyword id="KW-0963">Cytoplasm</keyword>
<keyword id="KW-0378">Hydrolase</keyword>
<keyword id="KW-0645">Protease</keyword>
<keyword id="KW-0720">Serine protease</keyword>
<comment type="function">
    <text evidence="1">Cleaves peptides in various proteins in a process that requires ATP hydrolysis. Has a chymotrypsin-like activity. Plays a major role in the degradation of misfolded proteins.</text>
</comment>
<comment type="catalytic activity">
    <reaction evidence="1">
        <text>Hydrolysis of proteins to small peptides in the presence of ATP and magnesium. alpha-casein is the usual test substrate. In the absence of ATP, only oligopeptides shorter than five residues are hydrolyzed (such as succinyl-Leu-Tyr-|-NHMec, and Leu-Tyr-Leu-|-Tyr-Trp, in which cleavage of the -Tyr-|-Leu- and -Tyr-|-Trp bonds also occurs).</text>
        <dbReference type="EC" id="3.4.21.92"/>
    </reaction>
</comment>
<comment type="subunit">
    <text evidence="1">Fourteen ClpP subunits assemble into 2 heptameric rings which stack back to back to give a disk-like structure with a central cavity, resembling the structure of eukaryotic proteasomes.</text>
</comment>
<comment type="subcellular location">
    <subcellularLocation>
        <location evidence="1">Cytoplasm</location>
    </subcellularLocation>
</comment>
<comment type="similarity">
    <text evidence="1">Belongs to the peptidase S14 family.</text>
</comment>
<reference key="1">
    <citation type="journal article" date="2008" name="J. Bacteriol.">
        <title>Complete genome sequence of the mosquitocidal bacterium Bacillus sphaericus C3-41 and comparison with those of closely related Bacillus species.</title>
        <authorList>
            <person name="Hu X."/>
            <person name="Fan W."/>
            <person name="Han B."/>
            <person name="Liu H."/>
            <person name="Zheng D."/>
            <person name="Li Q."/>
            <person name="Dong W."/>
            <person name="Yan J."/>
            <person name="Gao M."/>
            <person name="Berry C."/>
            <person name="Yuan Z."/>
        </authorList>
    </citation>
    <scope>NUCLEOTIDE SEQUENCE [LARGE SCALE GENOMIC DNA]</scope>
    <source>
        <strain>C3-41</strain>
    </source>
</reference>
<evidence type="ECO:0000255" key="1">
    <source>
        <dbReference type="HAMAP-Rule" id="MF_00444"/>
    </source>
</evidence>
<proteinExistence type="inferred from homology"/>
<sequence length="197" mass="21628">MNLIPTVIEQTSRGERAYDIYSRLLKDRIILLGSAIDDNVANSIVAQLLFLQAEDPDKDISLYINSPGGSITAGMAIYDTMQIIKPKVQTICIGMAASMGAFLLAAGEPGKRFALPNAEVMIHQPLGGAQGQATEIEIAAKRILFLREKLNGILSERTGQPLEVIARDTDRDNFMTAERAKEYGLIDHIMHRSTDNK</sequence>
<protein>
    <recommendedName>
        <fullName evidence="1">ATP-dependent Clp protease proteolytic subunit</fullName>
        <ecNumber evidence="1">3.4.21.92</ecNumber>
    </recommendedName>
    <alternativeName>
        <fullName evidence="1">Endopeptidase Clp</fullName>
    </alternativeName>
</protein>
<name>CLPP_LYSSC</name>
<organism>
    <name type="scientific">Lysinibacillus sphaericus (strain C3-41)</name>
    <dbReference type="NCBI Taxonomy" id="444177"/>
    <lineage>
        <taxon>Bacteria</taxon>
        <taxon>Bacillati</taxon>
        <taxon>Bacillota</taxon>
        <taxon>Bacilli</taxon>
        <taxon>Bacillales</taxon>
        <taxon>Bacillaceae</taxon>
        <taxon>Lysinibacillus</taxon>
    </lineage>
</organism>
<dbReference type="EC" id="3.4.21.92" evidence="1"/>
<dbReference type="EMBL" id="CP000817">
    <property type="protein sequence ID" value="ACA38079.1"/>
    <property type="molecule type" value="Genomic_DNA"/>
</dbReference>
<dbReference type="RefSeq" id="WP_008173241.1">
    <property type="nucleotide sequence ID" value="NC_010382.1"/>
</dbReference>
<dbReference type="SMR" id="B1HVR0"/>
<dbReference type="MEROPS" id="S14.001"/>
<dbReference type="EnsemblBacteria" id="ACA38079">
    <property type="protein sequence ID" value="ACA38079"/>
    <property type="gene ID" value="Bsph_0452"/>
</dbReference>
<dbReference type="GeneID" id="29441920"/>
<dbReference type="KEGG" id="lsp:Bsph_0452"/>
<dbReference type="HOGENOM" id="CLU_058707_3_2_9"/>
<dbReference type="Proteomes" id="UP000002164">
    <property type="component" value="Chromosome"/>
</dbReference>
<dbReference type="GO" id="GO:0005737">
    <property type="term" value="C:cytoplasm"/>
    <property type="evidence" value="ECO:0007669"/>
    <property type="project" value="UniProtKB-SubCell"/>
</dbReference>
<dbReference type="GO" id="GO:0009368">
    <property type="term" value="C:endopeptidase Clp complex"/>
    <property type="evidence" value="ECO:0007669"/>
    <property type="project" value="TreeGrafter"/>
</dbReference>
<dbReference type="GO" id="GO:0004176">
    <property type="term" value="F:ATP-dependent peptidase activity"/>
    <property type="evidence" value="ECO:0007669"/>
    <property type="project" value="InterPro"/>
</dbReference>
<dbReference type="GO" id="GO:0051117">
    <property type="term" value="F:ATPase binding"/>
    <property type="evidence" value="ECO:0007669"/>
    <property type="project" value="TreeGrafter"/>
</dbReference>
<dbReference type="GO" id="GO:0004252">
    <property type="term" value="F:serine-type endopeptidase activity"/>
    <property type="evidence" value="ECO:0007669"/>
    <property type="project" value="UniProtKB-UniRule"/>
</dbReference>
<dbReference type="GO" id="GO:0006515">
    <property type="term" value="P:protein quality control for misfolded or incompletely synthesized proteins"/>
    <property type="evidence" value="ECO:0007669"/>
    <property type="project" value="TreeGrafter"/>
</dbReference>
<dbReference type="CDD" id="cd07017">
    <property type="entry name" value="S14_ClpP_2"/>
    <property type="match status" value="1"/>
</dbReference>
<dbReference type="FunFam" id="3.90.226.10:FF:000001">
    <property type="entry name" value="ATP-dependent Clp protease proteolytic subunit"/>
    <property type="match status" value="1"/>
</dbReference>
<dbReference type="Gene3D" id="3.90.226.10">
    <property type="entry name" value="2-enoyl-CoA Hydratase, Chain A, domain 1"/>
    <property type="match status" value="1"/>
</dbReference>
<dbReference type="HAMAP" id="MF_00444">
    <property type="entry name" value="ClpP"/>
    <property type="match status" value="1"/>
</dbReference>
<dbReference type="InterPro" id="IPR001907">
    <property type="entry name" value="ClpP"/>
</dbReference>
<dbReference type="InterPro" id="IPR029045">
    <property type="entry name" value="ClpP/crotonase-like_dom_sf"/>
</dbReference>
<dbReference type="InterPro" id="IPR023562">
    <property type="entry name" value="ClpP/TepA"/>
</dbReference>
<dbReference type="InterPro" id="IPR033135">
    <property type="entry name" value="ClpP_His_AS"/>
</dbReference>
<dbReference type="InterPro" id="IPR018215">
    <property type="entry name" value="ClpP_Ser_AS"/>
</dbReference>
<dbReference type="NCBIfam" id="TIGR00493">
    <property type="entry name" value="clpP"/>
    <property type="match status" value="1"/>
</dbReference>
<dbReference type="NCBIfam" id="NF001368">
    <property type="entry name" value="PRK00277.1"/>
    <property type="match status" value="1"/>
</dbReference>
<dbReference type="NCBIfam" id="NF009205">
    <property type="entry name" value="PRK12553.1"/>
    <property type="match status" value="1"/>
</dbReference>
<dbReference type="PANTHER" id="PTHR10381">
    <property type="entry name" value="ATP-DEPENDENT CLP PROTEASE PROTEOLYTIC SUBUNIT"/>
    <property type="match status" value="1"/>
</dbReference>
<dbReference type="PANTHER" id="PTHR10381:SF70">
    <property type="entry name" value="ATP-DEPENDENT CLP PROTEASE PROTEOLYTIC SUBUNIT"/>
    <property type="match status" value="1"/>
</dbReference>
<dbReference type="Pfam" id="PF00574">
    <property type="entry name" value="CLP_protease"/>
    <property type="match status" value="1"/>
</dbReference>
<dbReference type="PRINTS" id="PR00127">
    <property type="entry name" value="CLPPROTEASEP"/>
</dbReference>
<dbReference type="SUPFAM" id="SSF52096">
    <property type="entry name" value="ClpP/crotonase"/>
    <property type="match status" value="1"/>
</dbReference>
<dbReference type="PROSITE" id="PS00382">
    <property type="entry name" value="CLP_PROTEASE_HIS"/>
    <property type="match status" value="1"/>
</dbReference>
<dbReference type="PROSITE" id="PS00381">
    <property type="entry name" value="CLP_PROTEASE_SER"/>
    <property type="match status" value="1"/>
</dbReference>
<gene>
    <name evidence="1" type="primary">clpP</name>
    <name type="ordered locus">Bsph_0452</name>
</gene>